<sequence>MAESFTTTNRYFDNKHYPRGFSRHGDFTIKEAQLLERHGHAFNDLDLGKREPVTEEEKLFVAVCRGEREPVTDAERVWSKYMTRIKRPKRFHTLSGGKPQVEGAEDYTEADD</sequence>
<protein>
    <recommendedName>
        <fullName evidence="2">Macrodomain Ori protein</fullName>
    </recommendedName>
</protein>
<accession>Q7CPD8</accession>
<accession>Q7BM27</accession>
<proteinExistence type="inferred from homology"/>
<comment type="function">
    <text evidence="2">Involved in the organization of the Ori region of the chromosome into a macrodomain (MD) (By similarity). It constrains DNA mobility in the Ori macrodomain and limits long-distance DNA interactions with other chromosomal regions (By similarity).</text>
</comment>
<comment type="similarity">
    <text evidence="4">Belongs to the MaoP family.</text>
</comment>
<feature type="initiator methionine" description="Removed" evidence="1">
    <location>
        <position position="1"/>
    </location>
</feature>
<feature type="chain" id="PRO_0000292442" description="Macrodomain Ori protein">
    <location>
        <begin position="2"/>
        <end position="112"/>
    </location>
</feature>
<feature type="region of interest" description="Disordered" evidence="3">
    <location>
        <begin position="91"/>
        <end position="112"/>
    </location>
</feature>
<feature type="compositionally biased region" description="Acidic residues" evidence="3">
    <location>
        <begin position="103"/>
        <end position="112"/>
    </location>
</feature>
<gene>
    <name evidence="2" type="primary">maoP</name>
    <name type="synonym">yifE</name>
    <name type="ordered locus">STM3898</name>
    <name type="ORF">STMD1.96</name>
</gene>
<dbReference type="EMBL" id="AF233324">
    <property type="protein sequence ID" value="AAF33485.1"/>
    <property type="molecule type" value="Genomic_DNA"/>
</dbReference>
<dbReference type="EMBL" id="AE006468">
    <property type="protein sequence ID" value="AAL22748.1"/>
    <property type="molecule type" value="Genomic_DNA"/>
</dbReference>
<dbReference type="RefSeq" id="NP_462789.1">
    <property type="nucleotide sequence ID" value="NC_003197.2"/>
</dbReference>
<dbReference type="STRING" id="99287.STM3898"/>
<dbReference type="PaxDb" id="99287-STM3898"/>
<dbReference type="GeneID" id="1255424"/>
<dbReference type="KEGG" id="stm:STM3898"/>
<dbReference type="PATRIC" id="fig|99287.12.peg.4120"/>
<dbReference type="HOGENOM" id="CLU_144599_2_2_6"/>
<dbReference type="OMA" id="CRGIREP"/>
<dbReference type="PhylomeDB" id="Q7CPD8"/>
<dbReference type="BioCyc" id="SENT99287:STM3898-MONOMER"/>
<dbReference type="Proteomes" id="UP000001014">
    <property type="component" value="Chromosome"/>
</dbReference>
<dbReference type="InterPro" id="IPR007335">
    <property type="entry name" value="DUF413"/>
</dbReference>
<dbReference type="NCBIfam" id="NF008251">
    <property type="entry name" value="PRK11027.1-1"/>
    <property type="match status" value="1"/>
</dbReference>
<dbReference type="NCBIfam" id="NF008252">
    <property type="entry name" value="PRK11027.1-2"/>
    <property type="match status" value="1"/>
</dbReference>
<dbReference type="NCBIfam" id="NF008253">
    <property type="entry name" value="PRK11027.1-4"/>
    <property type="match status" value="1"/>
</dbReference>
<dbReference type="Pfam" id="PF04219">
    <property type="entry name" value="DUF413"/>
    <property type="match status" value="1"/>
</dbReference>
<name>MAOP_SALTY</name>
<keyword id="KW-1185">Reference proteome</keyword>
<evidence type="ECO:0000250" key="1"/>
<evidence type="ECO:0000250" key="2">
    <source>
        <dbReference type="UniProtKB" id="P0ADN2"/>
    </source>
</evidence>
<evidence type="ECO:0000256" key="3">
    <source>
        <dbReference type="SAM" id="MobiDB-lite"/>
    </source>
</evidence>
<evidence type="ECO:0000305" key="4"/>
<reference key="1">
    <citation type="journal article" date="2001" name="Nature">
        <title>Complete genome sequence of Salmonella enterica serovar Typhimurium LT2.</title>
        <authorList>
            <person name="McClelland M."/>
            <person name="Sanderson K.E."/>
            <person name="Spieth J."/>
            <person name="Clifton S.W."/>
            <person name="Latreille P."/>
            <person name="Courtney L."/>
            <person name="Porwollik S."/>
            <person name="Ali J."/>
            <person name="Dante M."/>
            <person name="Du F."/>
            <person name="Hou S."/>
            <person name="Layman D."/>
            <person name="Leonard S."/>
            <person name="Nguyen C."/>
            <person name="Scott K."/>
            <person name="Holmes A."/>
            <person name="Grewal N."/>
            <person name="Mulvaney E."/>
            <person name="Ryan E."/>
            <person name="Sun H."/>
            <person name="Florea L."/>
            <person name="Miller W."/>
            <person name="Stoneking T."/>
            <person name="Nhan M."/>
            <person name="Waterston R."/>
            <person name="Wilson R.K."/>
        </authorList>
    </citation>
    <scope>NUCLEOTIDE SEQUENCE [LARGE SCALE GENOMIC DNA]</scope>
    <source>
        <strain>LT2 / SGSC1412 / ATCC 700720</strain>
    </source>
</reference>
<organism>
    <name type="scientific">Salmonella typhimurium (strain LT2 / SGSC1412 / ATCC 700720)</name>
    <dbReference type="NCBI Taxonomy" id="99287"/>
    <lineage>
        <taxon>Bacteria</taxon>
        <taxon>Pseudomonadati</taxon>
        <taxon>Pseudomonadota</taxon>
        <taxon>Gammaproteobacteria</taxon>
        <taxon>Enterobacterales</taxon>
        <taxon>Enterobacteriaceae</taxon>
        <taxon>Salmonella</taxon>
    </lineage>
</organism>